<evidence type="ECO:0000255" key="1">
    <source>
        <dbReference type="HAMAP-Rule" id="MF_00746"/>
    </source>
</evidence>
<gene>
    <name evidence="1" type="primary">sprT</name>
    <name type="ordered locus">SBO_3046</name>
</gene>
<name>SPRT_SHIBS</name>
<sequence>MKTSRLPIAIQQAVMRRLREKLAQANLKLGRNYPEPKLSYTQRGTSAGTAWLESYEIRLNPVLLLENSEAFIEEVVPHELAHLLVWKHFGRVAPHGKEWKWMMENVLGVPARRTHQFELQSVRRNTFPYRCKCQEHQLTVRRHNRVVRGEAVYRCVHCGEQLVAK</sequence>
<dbReference type="EMBL" id="CP000036">
    <property type="protein sequence ID" value="ABB67552.1"/>
    <property type="molecule type" value="Genomic_DNA"/>
</dbReference>
<dbReference type="RefSeq" id="WP_001300769.1">
    <property type="nucleotide sequence ID" value="NC_007613.1"/>
</dbReference>
<dbReference type="SMR" id="Q31WK6"/>
<dbReference type="KEGG" id="sbo:SBO_3046"/>
<dbReference type="HOGENOM" id="CLU_113336_0_1_6"/>
<dbReference type="Proteomes" id="UP000007067">
    <property type="component" value="Chromosome"/>
</dbReference>
<dbReference type="GO" id="GO:0005737">
    <property type="term" value="C:cytoplasm"/>
    <property type="evidence" value="ECO:0007669"/>
    <property type="project" value="UniProtKB-SubCell"/>
</dbReference>
<dbReference type="GO" id="GO:0008270">
    <property type="term" value="F:zinc ion binding"/>
    <property type="evidence" value="ECO:0007669"/>
    <property type="project" value="UniProtKB-UniRule"/>
</dbReference>
<dbReference type="GO" id="GO:0006950">
    <property type="term" value="P:response to stress"/>
    <property type="evidence" value="ECO:0007669"/>
    <property type="project" value="UniProtKB-ARBA"/>
</dbReference>
<dbReference type="Gene3D" id="3.30.2010.10">
    <property type="entry name" value="Metalloproteases ('zincins'), catalytic domain"/>
    <property type="match status" value="1"/>
</dbReference>
<dbReference type="HAMAP" id="MF_00746">
    <property type="entry name" value="SprT"/>
    <property type="match status" value="1"/>
</dbReference>
<dbReference type="InterPro" id="IPR006640">
    <property type="entry name" value="SprT-like_domain"/>
</dbReference>
<dbReference type="InterPro" id="IPR035240">
    <property type="entry name" value="SprT_Zn_ribbon"/>
</dbReference>
<dbReference type="InterPro" id="IPR023483">
    <property type="entry name" value="Uncharacterised_SprT"/>
</dbReference>
<dbReference type="NCBIfam" id="NF003421">
    <property type="entry name" value="PRK04860.1"/>
    <property type="match status" value="1"/>
</dbReference>
<dbReference type="PANTHER" id="PTHR38773">
    <property type="entry name" value="PROTEIN SPRT"/>
    <property type="match status" value="1"/>
</dbReference>
<dbReference type="PANTHER" id="PTHR38773:SF1">
    <property type="entry name" value="PROTEIN SPRT"/>
    <property type="match status" value="1"/>
</dbReference>
<dbReference type="Pfam" id="PF10263">
    <property type="entry name" value="SprT-like"/>
    <property type="match status" value="1"/>
</dbReference>
<dbReference type="Pfam" id="PF17283">
    <property type="entry name" value="Zn_ribbon_SprT"/>
    <property type="match status" value="1"/>
</dbReference>
<dbReference type="SMART" id="SM00731">
    <property type="entry name" value="SprT"/>
    <property type="match status" value="1"/>
</dbReference>
<dbReference type="PROSITE" id="PS00142">
    <property type="entry name" value="ZINC_PROTEASE"/>
    <property type="match status" value="1"/>
</dbReference>
<reference key="1">
    <citation type="journal article" date="2005" name="Nucleic Acids Res.">
        <title>Genome dynamics and diversity of Shigella species, the etiologic agents of bacillary dysentery.</title>
        <authorList>
            <person name="Yang F."/>
            <person name="Yang J."/>
            <person name="Zhang X."/>
            <person name="Chen L."/>
            <person name="Jiang Y."/>
            <person name="Yan Y."/>
            <person name="Tang X."/>
            <person name="Wang J."/>
            <person name="Xiong Z."/>
            <person name="Dong J."/>
            <person name="Xue Y."/>
            <person name="Zhu Y."/>
            <person name="Xu X."/>
            <person name="Sun L."/>
            <person name="Chen S."/>
            <person name="Nie H."/>
            <person name="Peng J."/>
            <person name="Xu J."/>
            <person name="Wang Y."/>
            <person name="Yuan Z."/>
            <person name="Wen Y."/>
            <person name="Yao Z."/>
            <person name="Shen Y."/>
            <person name="Qiang B."/>
            <person name="Hou Y."/>
            <person name="Yu J."/>
            <person name="Jin Q."/>
        </authorList>
    </citation>
    <scope>NUCLEOTIDE SEQUENCE [LARGE SCALE GENOMIC DNA]</scope>
    <source>
        <strain>Sb227</strain>
    </source>
</reference>
<protein>
    <recommendedName>
        <fullName evidence="1">Protein SprT</fullName>
    </recommendedName>
</protein>
<organism>
    <name type="scientific">Shigella boydii serotype 4 (strain Sb227)</name>
    <dbReference type="NCBI Taxonomy" id="300268"/>
    <lineage>
        <taxon>Bacteria</taxon>
        <taxon>Pseudomonadati</taxon>
        <taxon>Pseudomonadota</taxon>
        <taxon>Gammaproteobacteria</taxon>
        <taxon>Enterobacterales</taxon>
        <taxon>Enterobacteriaceae</taxon>
        <taxon>Shigella</taxon>
    </lineage>
</organism>
<accession>Q31WK6</accession>
<feature type="chain" id="PRO_1000046540" description="Protein SprT">
    <location>
        <begin position="1"/>
        <end position="165"/>
    </location>
</feature>
<feature type="domain" description="SprT-like" evidence="1">
    <location>
        <begin position="20"/>
        <end position="163"/>
    </location>
</feature>
<feature type="active site" evidence="1">
    <location>
        <position position="79"/>
    </location>
</feature>
<feature type="binding site" evidence="1">
    <location>
        <position position="78"/>
    </location>
    <ligand>
        <name>Zn(2+)</name>
        <dbReference type="ChEBI" id="CHEBI:29105"/>
    </ligand>
</feature>
<feature type="binding site" evidence="1">
    <location>
        <position position="82"/>
    </location>
    <ligand>
        <name>Zn(2+)</name>
        <dbReference type="ChEBI" id="CHEBI:29105"/>
    </ligand>
</feature>
<proteinExistence type="inferred from homology"/>
<keyword id="KW-0963">Cytoplasm</keyword>
<keyword id="KW-0479">Metal-binding</keyword>
<keyword id="KW-0862">Zinc</keyword>
<comment type="cofactor">
    <cofactor evidence="1">
        <name>Zn(2+)</name>
        <dbReference type="ChEBI" id="CHEBI:29105"/>
    </cofactor>
    <text evidence="1">Binds 1 zinc ion.</text>
</comment>
<comment type="subcellular location">
    <subcellularLocation>
        <location evidence="1">Cytoplasm</location>
    </subcellularLocation>
</comment>
<comment type="similarity">
    <text evidence="1">Belongs to the SprT family.</text>
</comment>